<feature type="signal peptide" evidence="2">
    <location>
        <begin position="1"/>
        <end position="22"/>
    </location>
</feature>
<feature type="chain" id="PRO_0000029335" description="Foldase protein PrsA 1">
    <location>
        <begin position="23"/>
        <end position="351"/>
    </location>
</feature>
<feature type="domain" description="PpiC">
    <location>
        <begin position="145"/>
        <end position="240"/>
    </location>
</feature>
<feature type="region of interest" description="Disordered" evidence="3">
    <location>
        <begin position="303"/>
        <end position="351"/>
    </location>
</feature>
<feature type="compositionally biased region" description="Low complexity" evidence="3">
    <location>
        <begin position="303"/>
        <end position="317"/>
    </location>
</feature>
<feature type="compositionally biased region" description="Low complexity" evidence="3">
    <location>
        <begin position="326"/>
        <end position="351"/>
    </location>
</feature>
<feature type="lipid moiety-binding region" description="N-palmitoyl cysteine" evidence="2">
    <location>
        <position position="23"/>
    </location>
</feature>
<feature type="lipid moiety-binding region" description="S-diacylglycerol cysteine" evidence="2">
    <location>
        <position position="23"/>
    </location>
</feature>
<protein>
    <recommendedName>
        <fullName>Foldase protein PrsA 1</fullName>
        <ecNumber>5.2.1.8</ecNumber>
    </recommendedName>
</protein>
<dbReference type="EC" id="5.2.1.8"/>
<dbReference type="EMBL" id="AE009949">
    <property type="protein sequence ID" value="AAL97991.1"/>
    <property type="molecule type" value="Genomic_DNA"/>
</dbReference>
<dbReference type="SMR" id="Q8P0E5"/>
<dbReference type="KEGG" id="spm:spyM18_1400"/>
<dbReference type="HOGENOM" id="CLU_034646_6_0_9"/>
<dbReference type="GO" id="GO:0005886">
    <property type="term" value="C:plasma membrane"/>
    <property type="evidence" value="ECO:0007669"/>
    <property type="project" value="UniProtKB-SubCell"/>
</dbReference>
<dbReference type="GO" id="GO:0003755">
    <property type="term" value="F:peptidyl-prolyl cis-trans isomerase activity"/>
    <property type="evidence" value="ECO:0007669"/>
    <property type="project" value="UniProtKB-UniRule"/>
</dbReference>
<dbReference type="GO" id="GO:0006457">
    <property type="term" value="P:protein folding"/>
    <property type="evidence" value="ECO:0007669"/>
    <property type="project" value="UniProtKB-UniRule"/>
</dbReference>
<dbReference type="Gene3D" id="3.10.50.40">
    <property type="match status" value="1"/>
</dbReference>
<dbReference type="HAMAP" id="MF_01145">
    <property type="entry name" value="Foldase_PrsA"/>
    <property type="match status" value="1"/>
</dbReference>
<dbReference type="InterPro" id="IPR023059">
    <property type="entry name" value="Foldase_PrsA"/>
</dbReference>
<dbReference type="InterPro" id="IPR046357">
    <property type="entry name" value="PPIase_dom_sf"/>
</dbReference>
<dbReference type="InterPro" id="IPR000297">
    <property type="entry name" value="PPIase_PpiC"/>
</dbReference>
<dbReference type="InterPro" id="IPR050245">
    <property type="entry name" value="PrsA_foldase"/>
</dbReference>
<dbReference type="InterPro" id="IPR027304">
    <property type="entry name" value="Trigger_fact/SurA_dom_sf"/>
</dbReference>
<dbReference type="NCBIfam" id="NF002361">
    <property type="entry name" value="PRK01326.1"/>
    <property type="match status" value="1"/>
</dbReference>
<dbReference type="PANTHER" id="PTHR47245:SF1">
    <property type="entry name" value="FOLDASE PROTEIN PRSA"/>
    <property type="match status" value="1"/>
</dbReference>
<dbReference type="PANTHER" id="PTHR47245">
    <property type="entry name" value="PEPTIDYLPROLYL ISOMERASE"/>
    <property type="match status" value="1"/>
</dbReference>
<dbReference type="Pfam" id="PF13145">
    <property type="entry name" value="Rotamase_2"/>
    <property type="match status" value="1"/>
</dbReference>
<dbReference type="SUPFAM" id="SSF54534">
    <property type="entry name" value="FKBP-like"/>
    <property type="match status" value="1"/>
</dbReference>
<dbReference type="SUPFAM" id="SSF109998">
    <property type="entry name" value="Triger factor/SurA peptide-binding domain-like"/>
    <property type="match status" value="1"/>
</dbReference>
<dbReference type="PROSITE" id="PS50198">
    <property type="entry name" value="PPIC_PPIASE_2"/>
    <property type="match status" value="1"/>
</dbReference>
<dbReference type="PROSITE" id="PS51257">
    <property type="entry name" value="PROKAR_LIPOPROTEIN"/>
    <property type="match status" value="1"/>
</dbReference>
<gene>
    <name type="primary">prsA1</name>
    <name type="ordered locus">spyM18_1400</name>
</gene>
<sequence length="351" mass="38533">MKNSNKLIASVVTLASVMALAACQSTNDNTKVISMKGDTISVSDFYNETKNTEVSQKAMLNLVISRVFEAQYGDKVSKKEVEKAYHKTAEQYGASFSAALAQSSLTPETFKRQIRSSKLVEYAVKEAAKKELTTQEYKKAYESYTPTMAVEMITLDNDETAKSVLEELKAEGADFTAIAKEKTTTPEKKVTYKFDSGAINVPTDVVKAASSLNEGGISDVISVLDPTSYQKKFYIVKVTKKAEKKSDWQEYKKRLKAIIIAEKSKDMNFQNKVIANALDKANVKIKDKAFANILAQYANLGQKTKAASESSTTSESSKAAEENPSESEQTQTSSAEEPTETEAQTQEPAAQ</sequence>
<organism>
    <name type="scientific">Streptococcus pyogenes serotype M18 (strain MGAS8232)</name>
    <dbReference type="NCBI Taxonomy" id="186103"/>
    <lineage>
        <taxon>Bacteria</taxon>
        <taxon>Bacillati</taxon>
        <taxon>Bacillota</taxon>
        <taxon>Bacilli</taxon>
        <taxon>Lactobacillales</taxon>
        <taxon>Streptococcaceae</taxon>
        <taxon>Streptococcus</taxon>
    </lineage>
</organism>
<comment type="function">
    <text evidence="1">Plays a major role in protein secretion by helping the post-translocational extracellular folding of several secreted proteins.</text>
</comment>
<comment type="catalytic activity">
    <reaction>
        <text>[protein]-peptidylproline (omega=180) = [protein]-peptidylproline (omega=0)</text>
        <dbReference type="Rhea" id="RHEA:16237"/>
        <dbReference type="Rhea" id="RHEA-COMP:10747"/>
        <dbReference type="Rhea" id="RHEA-COMP:10748"/>
        <dbReference type="ChEBI" id="CHEBI:83833"/>
        <dbReference type="ChEBI" id="CHEBI:83834"/>
        <dbReference type="EC" id="5.2.1.8"/>
    </reaction>
</comment>
<comment type="subcellular location">
    <subcellularLocation>
        <location evidence="4">Cell membrane</location>
        <topology evidence="4">Lipid-anchor</topology>
    </subcellularLocation>
</comment>
<comment type="similarity">
    <text evidence="4">Belongs to the PrsA family.</text>
</comment>
<name>PRSA1_STRP8</name>
<proteinExistence type="inferred from homology"/>
<accession>Q8P0E5</accession>
<evidence type="ECO:0000250" key="1"/>
<evidence type="ECO:0000255" key="2"/>
<evidence type="ECO:0000256" key="3">
    <source>
        <dbReference type="SAM" id="MobiDB-lite"/>
    </source>
</evidence>
<evidence type="ECO:0000305" key="4"/>
<reference key="1">
    <citation type="journal article" date="2002" name="Proc. Natl. Acad. Sci. U.S.A.">
        <title>Genome sequence and comparative microarray analysis of serotype M18 group A Streptococcus strains associated with acute rheumatic fever outbreaks.</title>
        <authorList>
            <person name="Smoot J.C."/>
            <person name="Barbian K.D."/>
            <person name="Van Gompel J.J."/>
            <person name="Smoot L.M."/>
            <person name="Chaussee M.S."/>
            <person name="Sylva G.L."/>
            <person name="Sturdevant D.E."/>
            <person name="Ricklefs S.M."/>
            <person name="Porcella S.F."/>
            <person name="Parkins L.D."/>
            <person name="Beres S.B."/>
            <person name="Campbell D.S."/>
            <person name="Smith T.M."/>
            <person name="Zhang Q."/>
            <person name="Kapur V."/>
            <person name="Daly J.A."/>
            <person name="Veasy L.G."/>
            <person name="Musser J.M."/>
        </authorList>
    </citation>
    <scope>NUCLEOTIDE SEQUENCE [LARGE SCALE GENOMIC DNA]</scope>
    <source>
        <strain>MGAS8232</strain>
    </source>
</reference>
<keyword id="KW-1003">Cell membrane</keyword>
<keyword id="KW-0413">Isomerase</keyword>
<keyword id="KW-0449">Lipoprotein</keyword>
<keyword id="KW-0472">Membrane</keyword>
<keyword id="KW-0564">Palmitate</keyword>
<keyword id="KW-0697">Rotamase</keyword>
<keyword id="KW-0732">Signal</keyword>